<accession>P32646</accession>
<accession>Q9LD17</accession>
<dbReference type="EC" id="7.1.1.9"/>
<dbReference type="EMBL" id="AF211254">
    <property type="protein sequence ID" value="AAF19523.1"/>
    <property type="molecule type" value="mRNA"/>
</dbReference>
<dbReference type="PIR" id="A39653">
    <property type="entry name" value="A39653"/>
</dbReference>
<dbReference type="SMR" id="P32646"/>
<dbReference type="OrthoDB" id="5835829at2759"/>
<dbReference type="GO" id="GO:0005743">
    <property type="term" value="C:mitochondrial inner membrane"/>
    <property type="evidence" value="ECO:0007669"/>
    <property type="project" value="UniProtKB-SubCell"/>
</dbReference>
<dbReference type="GO" id="GO:0005507">
    <property type="term" value="F:copper ion binding"/>
    <property type="evidence" value="ECO:0007669"/>
    <property type="project" value="InterPro"/>
</dbReference>
<dbReference type="GO" id="GO:0004129">
    <property type="term" value="F:cytochrome-c oxidase activity"/>
    <property type="evidence" value="ECO:0007669"/>
    <property type="project" value="UniProtKB-EC"/>
</dbReference>
<dbReference type="GO" id="GO:0042773">
    <property type="term" value="P:ATP synthesis coupled electron transport"/>
    <property type="evidence" value="ECO:0007669"/>
    <property type="project" value="TreeGrafter"/>
</dbReference>
<dbReference type="CDD" id="cd13912">
    <property type="entry name" value="CcO_II_C"/>
    <property type="match status" value="1"/>
</dbReference>
<dbReference type="FunFam" id="1.10.287.90:FF:000004">
    <property type="entry name" value="Cytochrome c oxidase subunit 2"/>
    <property type="match status" value="1"/>
</dbReference>
<dbReference type="FunFam" id="2.60.40.420:FF:000001">
    <property type="entry name" value="Cytochrome c oxidase subunit 2"/>
    <property type="match status" value="1"/>
</dbReference>
<dbReference type="Gene3D" id="1.10.287.90">
    <property type="match status" value="1"/>
</dbReference>
<dbReference type="Gene3D" id="2.60.40.420">
    <property type="entry name" value="Cupredoxins - blue copper proteins"/>
    <property type="match status" value="1"/>
</dbReference>
<dbReference type="InterPro" id="IPR045187">
    <property type="entry name" value="CcO_II"/>
</dbReference>
<dbReference type="InterPro" id="IPR002429">
    <property type="entry name" value="CcO_II-like_C"/>
</dbReference>
<dbReference type="InterPro" id="IPR034210">
    <property type="entry name" value="CcO_II_C"/>
</dbReference>
<dbReference type="InterPro" id="IPR001505">
    <property type="entry name" value="Copper_CuA"/>
</dbReference>
<dbReference type="InterPro" id="IPR008972">
    <property type="entry name" value="Cupredoxin"/>
</dbReference>
<dbReference type="InterPro" id="IPR014222">
    <property type="entry name" value="Cyt_c_oxidase_su2"/>
</dbReference>
<dbReference type="InterPro" id="IPR011759">
    <property type="entry name" value="Cyt_c_oxidase_su2_TM_dom"/>
</dbReference>
<dbReference type="InterPro" id="IPR036257">
    <property type="entry name" value="Cyt_c_oxidase_su2_TM_sf"/>
</dbReference>
<dbReference type="NCBIfam" id="TIGR02866">
    <property type="entry name" value="CoxB"/>
    <property type="match status" value="1"/>
</dbReference>
<dbReference type="PANTHER" id="PTHR22888:SF9">
    <property type="entry name" value="CYTOCHROME C OXIDASE SUBUNIT 2"/>
    <property type="match status" value="1"/>
</dbReference>
<dbReference type="PANTHER" id="PTHR22888">
    <property type="entry name" value="CYTOCHROME C OXIDASE, SUBUNIT II"/>
    <property type="match status" value="1"/>
</dbReference>
<dbReference type="Pfam" id="PF00116">
    <property type="entry name" value="COX2"/>
    <property type="match status" value="1"/>
</dbReference>
<dbReference type="Pfam" id="PF02790">
    <property type="entry name" value="COX2_TM"/>
    <property type="match status" value="1"/>
</dbReference>
<dbReference type="PRINTS" id="PR01166">
    <property type="entry name" value="CYCOXIDASEII"/>
</dbReference>
<dbReference type="SUPFAM" id="SSF49503">
    <property type="entry name" value="Cupredoxins"/>
    <property type="match status" value="1"/>
</dbReference>
<dbReference type="SUPFAM" id="SSF81464">
    <property type="entry name" value="Cytochrome c oxidase subunit II-like, transmembrane region"/>
    <property type="match status" value="1"/>
</dbReference>
<dbReference type="PROSITE" id="PS00078">
    <property type="entry name" value="COX2"/>
    <property type="match status" value="1"/>
</dbReference>
<dbReference type="PROSITE" id="PS50857">
    <property type="entry name" value="COX2_CUA"/>
    <property type="match status" value="1"/>
</dbReference>
<dbReference type="PROSITE" id="PS50999">
    <property type="entry name" value="COX2_TM"/>
    <property type="match status" value="1"/>
</dbReference>
<gene>
    <name type="primary">COX2</name>
</gene>
<keyword id="KW-0186">Copper</keyword>
<keyword id="KW-0249">Electron transport</keyword>
<keyword id="KW-0460">Magnesium</keyword>
<keyword id="KW-0472">Membrane</keyword>
<keyword id="KW-0479">Metal-binding</keyword>
<keyword id="KW-0496">Mitochondrion</keyword>
<keyword id="KW-0999">Mitochondrion inner membrane</keyword>
<keyword id="KW-0679">Respiratory chain</keyword>
<keyword id="KW-0809">Transit peptide</keyword>
<keyword id="KW-1278">Translocase</keyword>
<keyword id="KW-0812">Transmembrane</keyword>
<keyword id="KW-1133">Transmembrane helix</keyword>
<keyword id="KW-0813">Transport</keyword>
<proteinExistence type="evidence at transcript level"/>
<protein>
    <recommendedName>
        <fullName>Cytochrome c oxidase subunit 2, mitochondrial</fullName>
        <ecNumber>7.1.1.9</ecNumber>
    </recommendedName>
    <alternativeName>
        <fullName>Cytochrome c oxidase polypeptide II</fullName>
    </alternativeName>
</protein>
<feature type="transit peptide" description="Mitochondrion" evidence="2">
    <location>
        <begin position="1" status="less than"/>
        <end status="unknown"/>
    </location>
</feature>
<feature type="chain" id="PRO_0000006044" description="Cytochrome c oxidase subunit 2, mitochondrial">
    <location>
        <begin status="unknown"/>
        <end position="376"/>
    </location>
</feature>
<feature type="topological domain" description="Mitochondrial intermembrane" evidence="2">
    <location>
        <begin status="unknown"/>
        <end position="163"/>
    </location>
</feature>
<feature type="transmembrane region" description="Helical" evidence="2">
    <location>
        <begin position="164"/>
        <end position="184"/>
    </location>
</feature>
<feature type="topological domain" description="Mitochondrial matrix" evidence="2">
    <location>
        <begin position="185"/>
        <end position="204"/>
    </location>
</feature>
<feature type="transmembrane region" description="Helical" evidence="2">
    <location>
        <begin position="205"/>
        <end position="225"/>
    </location>
</feature>
<feature type="topological domain" description="Mitochondrial intermembrane" evidence="2">
    <location>
        <begin position="226"/>
        <end position="376"/>
    </location>
</feature>
<feature type="binding site" evidence="1">
    <location>
        <position position="309"/>
    </location>
    <ligand>
        <name>Cu cation</name>
        <dbReference type="ChEBI" id="CHEBI:23378"/>
        <label>A1</label>
    </ligand>
</feature>
<feature type="binding site" evidence="1">
    <location>
        <position position="344"/>
    </location>
    <ligand>
        <name>Cu cation</name>
        <dbReference type="ChEBI" id="CHEBI:23378"/>
        <label>A1</label>
    </ligand>
</feature>
<feature type="binding site" evidence="1">
    <location>
        <position position="344"/>
    </location>
    <ligand>
        <name>Cu cation</name>
        <dbReference type="ChEBI" id="CHEBI:23378"/>
        <label>A2</label>
    </ligand>
</feature>
<feature type="binding site" evidence="1">
    <location>
        <position position="346"/>
    </location>
    <ligand>
        <name>Cu cation</name>
        <dbReference type="ChEBI" id="CHEBI:23378"/>
        <label>A2</label>
    </ligand>
</feature>
<feature type="binding site" evidence="1">
    <location>
        <position position="346"/>
    </location>
    <ligand>
        <name>Mg(2+)</name>
        <dbReference type="ChEBI" id="CHEBI:18420"/>
        <note>ligand shared with subunit 1</note>
    </ligand>
</feature>
<feature type="binding site" evidence="1">
    <location>
        <position position="348"/>
    </location>
    <ligand>
        <name>Cu cation</name>
        <dbReference type="ChEBI" id="CHEBI:23378"/>
        <label>A1</label>
    </ligand>
</feature>
<feature type="binding site" evidence="1">
    <location>
        <position position="348"/>
    </location>
    <ligand>
        <name>Cu cation</name>
        <dbReference type="ChEBI" id="CHEBI:23378"/>
        <label>A2</label>
    </ligand>
</feature>
<feature type="binding site" evidence="1">
    <location>
        <position position="352"/>
    </location>
    <ligand>
        <name>Cu cation</name>
        <dbReference type="ChEBI" id="CHEBI:23378"/>
        <label>A2</label>
    </ligand>
</feature>
<feature type="binding site" evidence="1">
    <location>
        <position position="355"/>
    </location>
    <ligand>
        <name>Cu cation</name>
        <dbReference type="ChEBI" id="CHEBI:23378"/>
        <label>A1</label>
    </ligand>
</feature>
<feature type="non-terminal residue">
    <location>
        <position position="1"/>
    </location>
</feature>
<organism>
    <name type="scientific">Vigna unguiculata</name>
    <name type="common">Cowpea</name>
    <dbReference type="NCBI Taxonomy" id="3917"/>
    <lineage>
        <taxon>Eukaryota</taxon>
        <taxon>Viridiplantae</taxon>
        <taxon>Streptophyta</taxon>
        <taxon>Embryophyta</taxon>
        <taxon>Tracheophyta</taxon>
        <taxon>Spermatophyta</taxon>
        <taxon>Magnoliopsida</taxon>
        <taxon>eudicotyledons</taxon>
        <taxon>Gunneridae</taxon>
        <taxon>Pentapetalae</taxon>
        <taxon>rosids</taxon>
        <taxon>fabids</taxon>
        <taxon>Fabales</taxon>
        <taxon>Fabaceae</taxon>
        <taxon>Papilionoideae</taxon>
        <taxon>50 kb inversion clade</taxon>
        <taxon>NPAAA clade</taxon>
        <taxon>indigoferoid/millettioid clade</taxon>
        <taxon>Phaseoleae</taxon>
        <taxon>Vigna</taxon>
    </lineage>
</organism>
<sequence length="376" mass="42222">STVVGKCCKGNFGMSRFLLSNDFQRKLIVSGKESYYDHFSKRSYSSPSKAPGTESTITSTKIKMPNIGSEGFAFSSFLSTVNKNSRMINFSSCLKTPVKPEQIAANPVILKMTTELEKIPRALRWMCGGFPAIALCDAPEPWQLGFQDAATPIMQGIMDLHHDIFFFLVQILVFVLWVLSRALWCFRSKISPIPQRIVHGTTIEILWTILPSIILMFIAIPSFTLLYSMDDVVVDPAITIKAIGHQWYWSYEYSDYNNSDEQSLAFDSYMVPEDDLELGQLRLLEVDNRVVVPAKTHLRVLITSADVLHSWAVPSLGVKCDAVPGRLNQISTFIQREGVYYGQCSEICGTNHAFMPIVVEAVSTKDYGSWVSNQIQ</sequence>
<reference key="1">
    <citation type="submission" date="1999-12" db="EMBL/GenBank/DDBJ databases">
        <authorList>
            <person name="Adams K.L."/>
        </authorList>
    </citation>
    <scope>NUCLEOTIDE SEQUENCE [MRNA]</scope>
</reference>
<reference key="2">
    <citation type="journal article" date="1991" name="Cell">
        <title>RNA-mediated transfer of the gene coxII from the mitochondrion to the nucleus during flowering plant evolution.</title>
        <authorList>
            <person name="Nugent J.M."/>
            <person name="Palmer J.D."/>
        </authorList>
    </citation>
    <scope>NUCLEOTIDE SEQUENCE [MRNA] OF 64-376</scope>
</reference>
<evidence type="ECO:0000250" key="1">
    <source>
        <dbReference type="UniProtKB" id="P00410"/>
    </source>
</evidence>
<evidence type="ECO:0000255" key="2"/>
<evidence type="ECO:0000305" key="3"/>
<comment type="function">
    <text evidence="1">Component of the cytochrome c oxidase, the last enzyme in the mitochondrial electron transport chain which drives oxidative phosphorylation. The respiratory chain contains 3 multisubunit complexes succinate dehydrogenase (complex II, CII), ubiquinol-cytochrome c oxidoreductase (cytochrome b-c1 complex, complex III, CIII) and cytochrome c oxidase (complex IV, CIV), that cooperate to transfer electrons derived from NADH and succinate to molecular oxygen, creating an electrochemical gradient over the inner membrane that drives transmembrane transport and the ATP synthase. Cytochrome c oxidase is the component of the respiratory chain that catalyzes the reduction of oxygen to water. Electrons originating from reduced cytochrome c in the intermembrane space (IMS) are transferred via the dinuclear copper A center (CU(A)) of subunit 2 and heme A of subunit 1 to the active site in subunit 1, a binuclear center (BNC) formed by heme A3 and copper B (CU(B)). The BNC reduces molecular oxygen to 2 water molecules using 4 electrons from cytochrome c in the IMS and 4 protons from the mitochondrial matrix.</text>
</comment>
<comment type="catalytic activity">
    <reaction evidence="1">
        <text>4 Fe(II)-[cytochrome c] + O2 + 8 H(+)(in) = 4 Fe(III)-[cytochrome c] + 2 H2O + 4 H(+)(out)</text>
        <dbReference type="Rhea" id="RHEA:11436"/>
        <dbReference type="Rhea" id="RHEA-COMP:10350"/>
        <dbReference type="Rhea" id="RHEA-COMP:14399"/>
        <dbReference type="ChEBI" id="CHEBI:15377"/>
        <dbReference type="ChEBI" id="CHEBI:15378"/>
        <dbReference type="ChEBI" id="CHEBI:15379"/>
        <dbReference type="ChEBI" id="CHEBI:29033"/>
        <dbReference type="ChEBI" id="CHEBI:29034"/>
        <dbReference type="EC" id="7.1.1.9"/>
    </reaction>
    <physiologicalReaction direction="left-to-right" evidence="1">
        <dbReference type="Rhea" id="RHEA:11437"/>
    </physiologicalReaction>
</comment>
<comment type="cofactor">
    <cofactor evidence="1">
        <name>Cu cation</name>
        <dbReference type="ChEBI" id="CHEBI:23378"/>
    </cofactor>
    <text evidence="1">Binds a dinuclear copper A center per subunit.</text>
</comment>
<comment type="subunit">
    <text evidence="1">Component of the cytochrome c oxidase (complex IV, CIV), a multisubunit enzyme composed of a catalytic core of 3 subunits and several supernumerary subunits. The complex exists as a monomer or a dimer and forms supercomplexes (SCs) in the inner mitochondrial membrane with ubiquinol-cytochrome c oxidoreductase (cytochrome b-c1 complex, complex III, CIII).</text>
</comment>
<comment type="subcellular location">
    <subcellularLocation>
        <location evidence="1">Mitochondrion inner membrane</location>
        <topology evidence="1">Multi-pass membrane protein</topology>
    </subcellularLocation>
</comment>
<comment type="similarity">
    <text evidence="3">Belongs to the cytochrome c oxidase subunit 2 family.</text>
</comment>
<name>COX2_VIGUN</name>